<reference key="1">
    <citation type="journal article" date="1993" name="Cell">
        <title>The syntaxin family of vesicular transport receptors.</title>
        <authorList>
            <person name="Bennett M.K."/>
            <person name="Garcia-Arraras J.E."/>
            <person name="Elferink L.A."/>
            <person name="Peterson K.E."/>
            <person name="Fleming A.M."/>
            <person name="Hazuka C.D."/>
            <person name="Scheller R.H."/>
        </authorList>
    </citation>
    <scope>NUCLEOTIDE SEQUENCE [MRNA]</scope>
    <scope>TISSUE SPECIFICITY</scope>
</reference>
<reference evidence="12" key="2">
    <citation type="journal article" date="2004" name="Nature">
        <title>Genome sequence of the Brown Norway rat yields insights into mammalian evolution.</title>
        <authorList>
            <person name="Gibbs R.A."/>
            <person name="Weinstock G.M."/>
            <person name="Metzker M.L."/>
            <person name="Muzny D.M."/>
            <person name="Sodergren E.J."/>
            <person name="Scherer S."/>
            <person name="Scott G."/>
            <person name="Steffen D."/>
            <person name="Worley K.C."/>
            <person name="Burch P.E."/>
            <person name="Okwuonu G."/>
            <person name="Hines S."/>
            <person name="Lewis L."/>
            <person name="Deramo C."/>
            <person name="Delgado O."/>
            <person name="Dugan-Rocha S."/>
            <person name="Miner G."/>
            <person name="Morgan M."/>
            <person name="Hawes A."/>
            <person name="Gill R."/>
            <person name="Holt R.A."/>
            <person name="Adams M.D."/>
            <person name="Amanatides P.G."/>
            <person name="Baden-Tillson H."/>
            <person name="Barnstead M."/>
            <person name="Chin S."/>
            <person name="Evans C.A."/>
            <person name="Ferriera S."/>
            <person name="Fosler C."/>
            <person name="Glodek A."/>
            <person name="Gu Z."/>
            <person name="Jennings D."/>
            <person name="Kraft C.L."/>
            <person name="Nguyen T."/>
            <person name="Pfannkoch C.M."/>
            <person name="Sitter C."/>
            <person name="Sutton G.G."/>
            <person name="Venter J.C."/>
            <person name="Woodage T."/>
            <person name="Smith D."/>
            <person name="Lee H.-M."/>
            <person name="Gustafson E."/>
            <person name="Cahill P."/>
            <person name="Kana A."/>
            <person name="Doucette-Stamm L."/>
            <person name="Weinstock K."/>
            <person name="Fechtel K."/>
            <person name="Weiss R.B."/>
            <person name="Dunn D.M."/>
            <person name="Green E.D."/>
            <person name="Blakesley R.W."/>
            <person name="Bouffard G.G."/>
            <person name="De Jong P.J."/>
            <person name="Osoegawa K."/>
            <person name="Zhu B."/>
            <person name="Marra M."/>
            <person name="Schein J."/>
            <person name="Bosdet I."/>
            <person name="Fjell C."/>
            <person name="Jones S."/>
            <person name="Krzywinski M."/>
            <person name="Mathewson C."/>
            <person name="Siddiqui A."/>
            <person name="Wye N."/>
            <person name="McPherson J."/>
            <person name="Zhao S."/>
            <person name="Fraser C.M."/>
            <person name="Shetty J."/>
            <person name="Shatsman S."/>
            <person name="Geer K."/>
            <person name="Chen Y."/>
            <person name="Abramzon S."/>
            <person name="Nierman W.C."/>
            <person name="Havlak P.H."/>
            <person name="Chen R."/>
            <person name="Durbin K.J."/>
            <person name="Egan A."/>
            <person name="Ren Y."/>
            <person name="Song X.-Z."/>
            <person name="Li B."/>
            <person name="Liu Y."/>
            <person name="Qin X."/>
            <person name="Cawley S."/>
            <person name="Cooney A.J."/>
            <person name="D'Souza L.M."/>
            <person name="Martin K."/>
            <person name="Wu J.Q."/>
            <person name="Gonzalez-Garay M.L."/>
            <person name="Jackson A.R."/>
            <person name="Kalafus K.J."/>
            <person name="McLeod M.P."/>
            <person name="Milosavljevic A."/>
            <person name="Virk D."/>
            <person name="Volkov A."/>
            <person name="Wheeler D.A."/>
            <person name="Zhang Z."/>
            <person name="Bailey J.A."/>
            <person name="Eichler E.E."/>
            <person name="Tuzun E."/>
            <person name="Birney E."/>
            <person name="Mongin E."/>
            <person name="Ureta-Vidal A."/>
            <person name="Woodwark C."/>
            <person name="Zdobnov E."/>
            <person name="Bork P."/>
            <person name="Suyama M."/>
            <person name="Torrents D."/>
            <person name="Alexandersson M."/>
            <person name="Trask B.J."/>
            <person name="Young J.M."/>
            <person name="Huang H."/>
            <person name="Wang H."/>
            <person name="Xing H."/>
            <person name="Daniels S."/>
            <person name="Gietzen D."/>
            <person name="Schmidt J."/>
            <person name="Stevens K."/>
            <person name="Vitt U."/>
            <person name="Wingrove J."/>
            <person name="Camara F."/>
            <person name="Mar Alba M."/>
            <person name="Abril J.F."/>
            <person name="Guigo R."/>
            <person name="Smit A."/>
            <person name="Dubchak I."/>
            <person name="Rubin E.M."/>
            <person name="Couronne O."/>
            <person name="Poliakov A."/>
            <person name="Huebner N."/>
            <person name="Ganten D."/>
            <person name="Goesele C."/>
            <person name="Hummel O."/>
            <person name="Kreitler T."/>
            <person name="Lee Y.-A."/>
            <person name="Monti J."/>
            <person name="Schulz H."/>
            <person name="Zimdahl H."/>
            <person name="Himmelbauer H."/>
            <person name="Lehrach H."/>
            <person name="Jacob H.J."/>
            <person name="Bromberg S."/>
            <person name="Gullings-Handley J."/>
            <person name="Jensen-Seaman M.I."/>
            <person name="Kwitek A.E."/>
            <person name="Lazar J."/>
            <person name="Pasko D."/>
            <person name="Tonellato P.J."/>
            <person name="Twigger S."/>
            <person name="Ponting C.P."/>
            <person name="Duarte J.M."/>
            <person name="Rice S."/>
            <person name="Goodstadt L."/>
            <person name="Beatson S.A."/>
            <person name="Emes R.D."/>
            <person name="Winter E.E."/>
            <person name="Webber C."/>
            <person name="Brandt P."/>
            <person name="Nyakatura G."/>
            <person name="Adetobi M."/>
            <person name="Chiaromonte F."/>
            <person name="Elnitski L."/>
            <person name="Eswara P."/>
            <person name="Hardison R.C."/>
            <person name="Hou M."/>
            <person name="Kolbe D."/>
            <person name="Makova K."/>
            <person name="Miller W."/>
            <person name="Nekrutenko A."/>
            <person name="Riemer C."/>
            <person name="Schwartz S."/>
            <person name="Taylor J."/>
            <person name="Yang S."/>
            <person name="Zhang Y."/>
            <person name="Lindpaintner K."/>
            <person name="Andrews T.D."/>
            <person name="Caccamo M."/>
            <person name="Clamp M."/>
            <person name="Clarke L."/>
            <person name="Curwen V."/>
            <person name="Durbin R.M."/>
            <person name="Eyras E."/>
            <person name="Searle S.M."/>
            <person name="Cooper G.M."/>
            <person name="Batzoglou S."/>
            <person name="Brudno M."/>
            <person name="Sidow A."/>
            <person name="Stone E.A."/>
            <person name="Payseur B.A."/>
            <person name="Bourque G."/>
            <person name="Lopez-Otin C."/>
            <person name="Puente X.S."/>
            <person name="Chakrabarti K."/>
            <person name="Chatterji S."/>
            <person name="Dewey C."/>
            <person name="Pachter L."/>
            <person name="Bray N."/>
            <person name="Yap V.B."/>
            <person name="Caspi A."/>
            <person name="Tesler G."/>
            <person name="Pevzner P.A."/>
            <person name="Haussler D."/>
            <person name="Roskin K.M."/>
            <person name="Baertsch R."/>
            <person name="Clawson H."/>
            <person name="Furey T.S."/>
            <person name="Hinrichs A.S."/>
            <person name="Karolchik D."/>
            <person name="Kent W.J."/>
            <person name="Rosenbloom K.R."/>
            <person name="Trumbower H."/>
            <person name="Weirauch M."/>
            <person name="Cooper D.N."/>
            <person name="Stenson P.D."/>
            <person name="Ma B."/>
            <person name="Brent M."/>
            <person name="Arumugam M."/>
            <person name="Shteynberg D."/>
            <person name="Copley R.R."/>
            <person name="Taylor M.S."/>
            <person name="Riethman H."/>
            <person name="Mudunuri U."/>
            <person name="Peterson J."/>
            <person name="Guyer M."/>
            <person name="Felsenfeld A."/>
            <person name="Old S."/>
            <person name="Mockrin S."/>
            <person name="Collins F.S."/>
        </authorList>
    </citation>
    <scope>NUCLEOTIDE SEQUENCE [LARGE SCALE GENOMIC DNA]</scope>
    <source>
        <strain evidence="12">Brown Norway</strain>
    </source>
</reference>
<reference evidence="11" key="3">
    <citation type="submission" date="2005-09" db="EMBL/GenBank/DDBJ databases">
        <authorList>
            <person name="Mural R.J."/>
            <person name="Adams M.D."/>
            <person name="Myers E.W."/>
            <person name="Smith H.O."/>
            <person name="Venter J.C."/>
        </authorList>
    </citation>
    <scope>NUCLEOTIDE SEQUENCE [LARGE SCALE GENOMIC DNA]</scope>
</reference>
<reference key="4">
    <citation type="journal article" date="2002" name="J. Biol. Chem.">
        <title>Amisyn, a novel syntaxin-binding protein that may regulate SNARE complex assembly.</title>
        <authorList>
            <person name="Scales S.J."/>
            <person name="Hesser B.A."/>
            <person name="Masuda E.S."/>
            <person name="Scheller R.H."/>
        </authorList>
    </citation>
    <scope>INTERACTION WITH STXBP6</scope>
</reference>
<reference key="5">
    <citation type="journal article" date="2004" name="J. Biol. Chem.">
        <title>Identification of SNAREs involved in synaptotagmin VII-regulated lysosomal exocytosis.</title>
        <authorList>
            <person name="Rao S.K."/>
            <person name="Huynh C."/>
            <person name="Proux-Gillardeaux V."/>
            <person name="Galli T."/>
            <person name="Andrews N.W."/>
        </authorList>
    </citation>
    <scope>SNARE COMPLEX CHARACTERIZATION</scope>
</reference>
<reference key="6">
    <citation type="journal article" date="2008" name="J. Cell Sci.">
        <title>Murine CENPF interacts with syntaxin 4 in the regulation of vesicular transport.</title>
        <authorList>
            <person name="Pooley R.D."/>
            <person name="Moynihan K.L."/>
            <person name="Soukoulis V."/>
            <person name="Reddy S."/>
            <person name="Francis R."/>
            <person name="Lo C."/>
            <person name="Ma L.-J."/>
            <person name="Bader D.M."/>
        </authorList>
    </citation>
    <scope>TISSUE SPECIFICITY</scope>
</reference>
<reference key="7">
    <citation type="journal article" date="2012" name="Nat. Commun.">
        <title>Quantitative maps of protein phosphorylation sites across 14 different rat organs and tissues.</title>
        <authorList>
            <person name="Lundby A."/>
            <person name="Secher A."/>
            <person name="Lage K."/>
            <person name="Nordsborg N.B."/>
            <person name="Dmytriyev A."/>
            <person name="Lundby C."/>
            <person name="Olsen J.V."/>
        </authorList>
    </citation>
    <scope>PHOSPHORYLATION [LARGE SCALE ANALYSIS] AT SER-15; SER-35 AND SER-117</scope>
    <scope>IDENTIFICATION BY MASS SPECTROMETRY [LARGE SCALE ANALYSIS]</scope>
</reference>
<reference key="8">
    <citation type="journal article" date="2020" name="J. Lipid Res.">
        <title>PLRP2 selectively localizes synaptic membrane proteins via acyl-chain remodeling of phospholipids.</title>
        <authorList>
            <person name="Kuge H."/>
            <person name="Miyamoto I."/>
            <person name="Yagyu K.I."/>
            <person name="Honke K."/>
        </authorList>
    </citation>
    <scope>FUNCTION</scope>
    <scope>SUBCELLULAR LOCATION</scope>
    <scope>SITE</scope>
    <scope>MUTAGENESIS OF ILE-290</scope>
</reference>
<keyword id="KW-1003">Cell membrane</keyword>
<keyword id="KW-0966">Cell projection</keyword>
<keyword id="KW-0175">Coiled coil</keyword>
<keyword id="KW-1009">Hearing</keyword>
<keyword id="KW-0472">Membrane</keyword>
<keyword id="KW-0532">Neurotransmitter transport</keyword>
<keyword id="KW-0597">Phosphoprotein</keyword>
<keyword id="KW-1185">Reference proteome</keyword>
<keyword id="KW-0812">Transmembrane</keyword>
<keyword id="KW-1133">Transmembrane helix</keyword>
<keyword id="KW-0813">Transport</keyword>
<comment type="function">
    <text evidence="2 3 8">Plasma membrane t-SNARE that mediates docking of transport vesicles (By similarity). Necessary for the translocation of SLC2A4 from intracellular vesicles to the plasma membrane (By similarity). In neurons, recruited at neurite tips to membrane domains rich in the phospholipid 1-oleoyl-2-palmitoyl-PC (OPPC) which promotes neurite tip surface expression of the dopamine transporter SLC6A3/DAT by facilitating fusion of SLC6A3-containing transport vesicles with the plasma membrane (PubMed:32963038). Together with STXB3 and VAMP2, may also play a role in docking/fusion of intracellular GLUT4-containing vesicles with the cell surface in adipocytes and in docking of synaptic vesicles at presynaptic active zones (By similarity). Required for normal hearing (By similarity).</text>
</comment>
<comment type="subunit">
    <text evidence="1 6">Found in a complex with VAMP8 and SNAP23. Detected in a complex with SNAP23 and STXBP4. Interacts with SNAP23 and SNAPIN. Interacts with VAMP2. Interacts with LLGL1. Interacts (via C-terminus) with CENPF. Interacts with DOC2B. Interacts with STXBP3; excludes interaction with DOC2B and SNAP25. Interacts with STXBP4; excludes interaction with VAMP2 (By similarity). Component of the SNARE complex composed of STX4, SNAP23 and VAMP7 that interacts with SYT7 during lysosomal exocytosis. Interacts with STXBP6. Interacts with STXBP5L (By similarity).</text>
</comment>
<comment type="interaction">
    <interactant intactId="EBI-918243">
        <id>Q08850</id>
    </interactant>
    <interactant intactId="EBI-520880">
        <id>P63045</id>
        <label>Vamp2</label>
    </interactant>
    <organismsDiffer>false</organismsDiffer>
    <experiments>8</experiments>
</comment>
<comment type="interaction">
    <interactant intactId="EBI-918243">
        <id>Q08850</id>
    </interactant>
    <interactant intactId="EBI-1812522">
        <id>O09044</id>
        <label>Snap23</label>
    </interactant>
    <organismsDiffer>true</organismsDiffer>
    <experiments>4</experiments>
</comment>
<comment type="interaction">
    <interactant intactId="EBI-918243">
        <id>Q08850</id>
    </interactant>
    <interactant intactId="EBI-8430169">
        <id>Q60770</id>
        <label>Stxbp3</label>
    </interactant>
    <organismsDiffer>true</organismsDiffer>
    <experiments>4</experiments>
</comment>
<comment type="subcellular location">
    <subcellularLocation>
        <location evidence="8">Cell membrane</location>
        <topology evidence="10">Single-pass type IV membrane protein</topology>
    </subcellularLocation>
    <subcellularLocation>
        <location evidence="8">Cell projection</location>
        <location evidence="8">Neuron projection</location>
    </subcellularLocation>
    <subcellularLocation>
        <location evidence="2">Cell projection</location>
        <location evidence="2">Stereocilium</location>
    </subcellularLocation>
    <text evidence="8">Localizes to neurite tips in neuronal cells.</text>
</comment>
<comment type="tissue specificity">
    <text evidence="7 9">Expressed in all tissues tested including adipose, brain, testis, intestine, liver, heart, spleen, skeletal muscle and kidney.</text>
</comment>
<comment type="similarity">
    <text evidence="10">Belongs to the syntaxin family.</text>
</comment>
<dbReference type="EMBL" id="L20821">
    <property type="protein sequence ID" value="AAA03046.1"/>
    <property type="molecule type" value="mRNA"/>
</dbReference>
<dbReference type="EMBL" id="AC111812">
    <property type="status" value="NOT_ANNOTATED_CDS"/>
    <property type="molecule type" value="Genomic_DNA"/>
</dbReference>
<dbReference type="EMBL" id="CH473956">
    <property type="protein sequence ID" value="EDM17224.1"/>
    <property type="molecule type" value="Genomic_DNA"/>
</dbReference>
<dbReference type="EMBL" id="CH473956">
    <property type="protein sequence ID" value="EDM17226.1"/>
    <property type="molecule type" value="Genomic_DNA"/>
</dbReference>
<dbReference type="PIR" id="E48213">
    <property type="entry name" value="E48213"/>
</dbReference>
<dbReference type="RefSeq" id="NP_112387.2">
    <property type="nucleotide sequence ID" value="NM_031125.2"/>
</dbReference>
<dbReference type="RefSeq" id="XP_038948248.1">
    <property type="nucleotide sequence ID" value="XM_039092320.2"/>
</dbReference>
<dbReference type="SMR" id="Q08850"/>
<dbReference type="BioGRID" id="249661">
    <property type="interactions" value="4"/>
</dbReference>
<dbReference type="CORUM" id="Q08850"/>
<dbReference type="DIP" id="DIP-373N"/>
<dbReference type="FunCoup" id="Q08850">
    <property type="interactions" value="837"/>
</dbReference>
<dbReference type="IntAct" id="Q08850">
    <property type="interactions" value="12"/>
</dbReference>
<dbReference type="MINT" id="Q08850"/>
<dbReference type="STRING" id="10116.ENSRNOP00000074754"/>
<dbReference type="iPTMnet" id="Q08850"/>
<dbReference type="PhosphoSitePlus" id="Q08850"/>
<dbReference type="SwissPalm" id="Q08850"/>
<dbReference type="PaxDb" id="10116-ENSRNOP00000026224"/>
<dbReference type="GeneID" id="81803"/>
<dbReference type="KEGG" id="rno:81803"/>
<dbReference type="UCSC" id="RGD:621019">
    <property type="organism name" value="rat"/>
</dbReference>
<dbReference type="AGR" id="RGD:621019"/>
<dbReference type="CTD" id="6810"/>
<dbReference type="RGD" id="621019">
    <property type="gene designation" value="Stx4"/>
</dbReference>
<dbReference type="VEuPathDB" id="HostDB:ENSRNOG00000019302"/>
<dbReference type="eggNOG" id="KOG0810">
    <property type="taxonomic scope" value="Eukaryota"/>
</dbReference>
<dbReference type="InParanoid" id="Q08850"/>
<dbReference type="OrthoDB" id="10255013at2759"/>
<dbReference type="PhylomeDB" id="Q08850"/>
<dbReference type="TreeFam" id="TF313763"/>
<dbReference type="Reactome" id="R-RNO-114516">
    <property type="pathway name" value="Disinhibition of SNARE formation"/>
</dbReference>
<dbReference type="Reactome" id="R-RNO-1236974">
    <property type="pathway name" value="ER-Phagosome pathway"/>
</dbReference>
<dbReference type="Reactome" id="R-RNO-199992">
    <property type="pathway name" value="trans-Golgi Network Vesicle Budding"/>
</dbReference>
<dbReference type="Reactome" id="R-RNO-449836">
    <property type="pathway name" value="Other interleukin signaling"/>
</dbReference>
<dbReference type="PRO" id="PR:Q08850"/>
<dbReference type="Proteomes" id="UP000002494">
    <property type="component" value="Chromosome 1"/>
</dbReference>
<dbReference type="Proteomes" id="UP000234681">
    <property type="component" value="Chromosome 1"/>
</dbReference>
<dbReference type="Bgee" id="ENSRNOG00000019302">
    <property type="expression patterns" value="Expressed in ovary and 20 other cell types or tissues"/>
</dbReference>
<dbReference type="GO" id="GO:0016324">
    <property type="term" value="C:apical plasma membrane"/>
    <property type="evidence" value="ECO:0000314"/>
    <property type="project" value="RGD"/>
</dbReference>
<dbReference type="GO" id="GO:0016323">
    <property type="term" value="C:basolateral plasma membrane"/>
    <property type="evidence" value="ECO:0000314"/>
    <property type="project" value="RGD"/>
</dbReference>
<dbReference type="GO" id="GO:0009986">
    <property type="term" value="C:cell surface"/>
    <property type="evidence" value="ECO:0000266"/>
    <property type="project" value="RGD"/>
</dbReference>
<dbReference type="GO" id="GO:0005737">
    <property type="term" value="C:cytoplasm"/>
    <property type="evidence" value="ECO:0000266"/>
    <property type="project" value="RGD"/>
</dbReference>
<dbReference type="GO" id="GO:0043197">
    <property type="term" value="C:dendritic spine"/>
    <property type="evidence" value="ECO:0000266"/>
    <property type="project" value="RGD"/>
</dbReference>
<dbReference type="GO" id="GO:0012505">
    <property type="term" value="C:endomembrane system"/>
    <property type="evidence" value="ECO:0000318"/>
    <property type="project" value="GO_Central"/>
</dbReference>
<dbReference type="GO" id="GO:0005768">
    <property type="term" value="C:endosome"/>
    <property type="evidence" value="ECO:0000266"/>
    <property type="project" value="RGD"/>
</dbReference>
<dbReference type="GO" id="GO:0005615">
    <property type="term" value="C:extracellular space"/>
    <property type="evidence" value="ECO:0000266"/>
    <property type="project" value="RGD"/>
</dbReference>
<dbReference type="GO" id="GO:0098978">
    <property type="term" value="C:glutamatergic synapse"/>
    <property type="evidence" value="ECO:0000314"/>
    <property type="project" value="SynGO"/>
</dbReference>
<dbReference type="GO" id="GO:0030027">
    <property type="term" value="C:lamellipodium"/>
    <property type="evidence" value="ECO:0000266"/>
    <property type="project" value="RGD"/>
</dbReference>
<dbReference type="GO" id="GO:0043219">
    <property type="term" value="C:lateral loop"/>
    <property type="evidence" value="ECO:0000266"/>
    <property type="project" value="RGD"/>
</dbReference>
<dbReference type="GO" id="GO:0016020">
    <property type="term" value="C:membrane"/>
    <property type="evidence" value="ECO:0000266"/>
    <property type="project" value="RGD"/>
</dbReference>
<dbReference type="GO" id="GO:0035749">
    <property type="term" value="C:myelin sheath adaxonal region"/>
    <property type="evidence" value="ECO:0000266"/>
    <property type="project" value="RGD"/>
</dbReference>
<dbReference type="GO" id="GO:0032589">
    <property type="term" value="C:neuron projection membrane"/>
    <property type="evidence" value="ECO:0000314"/>
    <property type="project" value="UniProtKB"/>
</dbReference>
<dbReference type="GO" id="GO:0048471">
    <property type="term" value="C:perinuclear region of cytoplasm"/>
    <property type="evidence" value="ECO:0000266"/>
    <property type="project" value="RGD"/>
</dbReference>
<dbReference type="GO" id="GO:0045335">
    <property type="term" value="C:phagocytic vesicle"/>
    <property type="evidence" value="ECO:0000266"/>
    <property type="project" value="RGD"/>
</dbReference>
<dbReference type="GO" id="GO:0005886">
    <property type="term" value="C:plasma membrane"/>
    <property type="evidence" value="ECO:0000266"/>
    <property type="project" value="RGD"/>
</dbReference>
<dbReference type="GO" id="GO:0098794">
    <property type="term" value="C:postsynapse"/>
    <property type="evidence" value="ECO:0000266"/>
    <property type="project" value="RGD"/>
</dbReference>
<dbReference type="GO" id="GO:0045211">
    <property type="term" value="C:postsynaptic membrane"/>
    <property type="evidence" value="ECO:0000314"/>
    <property type="project" value="SynGO"/>
</dbReference>
<dbReference type="GO" id="GO:0098793">
    <property type="term" value="C:presynapse"/>
    <property type="evidence" value="ECO:0007669"/>
    <property type="project" value="GOC"/>
</dbReference>
<dbReference type="GO" id="GO:0042383">
    <property type="term" value="C:sarcolemma"/>
    <property type="evidence" value="ECO:0000314"/>
    <property type="project" value="RGD"/>
</dbReference>
<dbReference type="GO" id="GO:0098685">
    <property type="term" value="C:Schaffer collateral - CA1 synapse"/>
    <property type="evidence" value="ECO:0000314"/>
    <property type="project" value="SynGO"/>
</dbReference>
<dbReference type="GO" id="GO:0031201">
    <property type="term" value="C:SNARE complex"/>
    <property type="evidence" value="ECO:0000314"/>
    <property type="project" value="UniProtKB"/>
</dbReference>
<dbReference type="GO" id="GO:0036477">
    <property type="term" value="C:somatodendritic compartment"/>
    <property type="evidence" value="ECO:0000266"/>
    <property type="project" value="RGD"/>
</dbReference>
<dbReference type="GO" id="GO:0042581">
    <property type="term" value="C:specific granule"/>
    <property type="evidence" value="ECO:0000266"/>
    <property type="project" value="RGD"/>
</dbReference>
<dbReference type="GO" id="GO:0032420">
    <property type="term" value="C:stereocilium"/>
    <property type="evidence" value="ECO:0000250"/>
    <property type="project" value="UniProtKB"/>
</dbReference>
<dbReference type="GO" id="GO:0000322">
    <property type="term" value="C:storage vacuole"/>
    <property type="evidence" value="ECO:0000266"/>
    <property type="project" value="RGD"/>
</dbReference>
<dbReference type="GO" id="GO:0045202">
    <property type="term" value="C:synapse"/>
    <property type="evidence" value="ECO:0000266"/>
    <property type="project" value="RGD"/>
</dbReference>
<dbReference type="GO" id="GO:0005802">
    <property type="term" value="C:trans-Golgi network"/>
    <property type="evidence" value="ECO:0000266"/>
    <property type="project" value="RGD"/>
</dbReference>
<dbReference type="GO" id="GO:0031267">
    <property type="term" value="F:small GTPase binding"/>
    <property type="evidence" value="ECO:0000353"/>
    <property type="project" value="RGD"/>
</dbReference>
<dbReference type="GO" id="GO:0005484">
    <property type="term" value="F:SNAP receptor activity"/>
    <property type="evidence" value="ECO:0000314"/>
    <property type="project" value="FlyBase"/>
</dbReference>
<dbReference type="GO" id="GO:0000149">
    <property type="term" value="F:SNARE binding"/>
    <property type="evidence" value="ECO:0000353"/>
    <property type="project" value="RGD"/>
</dbReference>
<dbReference type="GO" id="GO:0016230">
    <property type="term" value="F:sphingomyelin phosphodiesterase activator activity"/>
    <property type="evidence" value="ECO:0000266"/>
    <property type="project" value="RGD"/>
</dbReference>
<dbReference type="GO" id="GO:0034599">
    <property type="term" value="P:cellular response to oxidative stress"/>
    <property type="evidence" value="ECO:0000266"/>
    <property type="project" value="RGD"/>
</dbReference>
<dbReference type="GO" id="GO:0071346">
    <property type="term" value="P:cellular response to type II interferon"/>
    <property type="evidence" value="ECO:0000266"/>
    <property type="project" value="RGD"/>
</dbReference>
<dbReference type="GO" id="GO:1903575">
    <property type="term" value="P:cornified envelope assembly"/>
    <property type="evidence" value="ECO:0000266"/>
    <property type="project" value="RGD"/>
</dbReference>
<dbReference type="GO" id="GO:0098967">
    <property type="term" value="P:exocytic insertion of neurotransmitter receptor to postsynaptic membrane"/>
    <property type="evidence" value="ECO:0000314"/>
    <property type="project" value="SynGO"/>
</dbReference>
<dbReference type="GO" id="GO:0006887">
    <property type="term" value="P:exocytosis"/>
    <property type="evidence" value="ECO:0000318"/>
    <property type="project" value="GO_Central"/>
</dbReference>
<dbReference type="GO" id="GO:0006886">
    <property type="term" value="P:intracellular protein transport"/>
    <property type="evidence" value="ECO:0000318"/>
    <property type="project" value="GO_Central"/>
</dbReference>
<dbReference type="GO" id="GO:0046907">
    <property type="term" value="P:intracellular transport"/>
    <property type="evidence" value="ECO:0000303"/>
    <property type="project" value="RGD"/>
</dbReference>
<dbReference type="GO" id="GO:0060291">
    <property type="term" value="P:long-term synaptic potentiation"/>
    <property type="evidence" value="ECO:0000266"/>
    <property type="project" value="RGD"/>
</dbReference>
<dbReference type="GO" id="GO:0061025">
    <property type="term" value="P:membrane fusion"/>
    <property type="evidence" value="ECO:0000314"/>
    <property type="project" value="RGD"/>
</dbReference>
<dbReference type="GO" id="GO:0048284">
    <property type="term" value="P:organelle fusion"/>
    <property type="evidence" value="ECO:0000266"/>
    <property type="project" value="RGD"/>
</dbReference>
<dbReference type="GO" id="GO:0045785">
    <property type="term" value="P:positive regulation of cell adhesion"/>
    <property type="evidence" value="ECO:0000266"/>
    <property type="project" value="RGD"/>
</dbReference>
<dbReference type="GO" id="GO:0030335">
    <property type="term" value="P:positive regulation of cell migration"/>
    <property type="evidence" value="ECO:0000266"/>
    <property type="project" value="RGD"/>
</dbReference>
<dbReference type="GO" id="GO:0008284">
    <property type="term" value="P:positive regulation of cell population proliferation"/>
    <property type="evidence" value="ECO:0000266"/>
    <property type="project" value="RGD"/>
</dbReference>
<dbReference type="GO" id="GO:0050921">
    <property type="term" value="P:positive regulation of chemotaxis"/>
    <property type="evidence" value="ECO:0000266"/>
    <property type="project" value="RGD"/>
</dbReference>
<dbReference type="GO" id="GO:0043311">
    <property type="term" value="P:positive regulation of eosinophil degranulation"/>
    <property type="evidence" value="ECO:0000266"/>
    <property type="project" value="RGD"/>
</dbReference>
<dbReference type="GO" id="GO:0002639">
    <property type="term" value="P:positive regulation of immunoglobulin production"/>
    <property type="evidence" value="ECO:0000266"/>
    <property type="project" value="RGD"/>
</dbReference>
<dbReference type="GO" id="GO:0035774">
    <property type="term" value="P:positive regulation of insulin secretion involved in cellular response to glucose stimulus"/>
    <property type="evidence" value="ECO:0000266"/>
    <property type="project" value="RGD"/>
</dbReference>
<dbReference type="GO" id="GO:2000010">
    <property type="term" value="P:positive regulation of protein localization to cell surface"/>
    <property type="evidence" value="ECO:0000266"/>
    <property type="project" value="RGD"/>
</dbReference>
<dbReference type="GO" id="GO:1903078">
    <property type="term" value="P:positive regulation of protein localization to plasma membrane"/>
    <property type="evidence" value="ECO:0000266"/>
    <property type="project" value="RGD"/>
</dbReference>
<dbReference type="GO" id="GO:0034394">
    <property type="term" value="P:protein localization to cell surface"/>
    <property type="evidence" value="ECO:0000315"/>
    <property type="project" value="UniProtKB"/>
</dbReference>
<dbReference type="GO" id="GO:0065003">
    <property type="term" value="P:protein-containing complex assembly"/>
    <property type="evidence" value="ECO:0000314"/>
    <property type="project" value="RGD"/>
</dbReference>
<dbReference type="GO" id="GO:0017157">
    <property type="term" value="P:regulation of exocytosis"/>
    <property type="evidence" value="ECO:0000266"/>
    <property type="project" value="RGD"/>
</dbReference>
<dbReference type="GO" id="GO:1902041">
    <property type="term" value="P:regulation of extrinsic apoptotic signaling pathway via death domain receptors"/>
    <property type="evidence" value="ECO:0000266"/>
    <property type="project" value="RGD"/>
</dbReference>
<dbReference type="GO" id="GO:0099072">
    <property type="term" value="P:regulation of postsynaptic membrane neurotransmitter receptor levels"/>
    <property type="evidence" value="ECO:0000266"/>
    <property type="project" value="RGD"/>
</dbReference>
<dbReference type="GO" id="GO:0007605">
    <property type="term" value="P:sensory perception of sound"/>
    <property type="evidence" value="ECO:0000250"/>
    <property type="project" value="UniProtKB"/>
</dbReference>
<dbReference type="GO" id="GO:0035493">
    <property type="term" value="P:SNARE complex assembly"/>
    <property type="evidence" value="ECO:0000266"/>
    <property type="project" value="RGD"/>
</dbReference>
<dbReference type="GO" id="GO:0016081">
    <property type="term" value="P:synaptic vesicle docking"/>
    <property type="evidence" value="ECO:0000314"/>
    <property type="project" value="RGD"/>
</dbReference>
<dbReference type="GO" id="GO:0048278">
    <property type="term" value="P:vesicle docking"/>
    <property type="evidence" value="ECO:0000318"/>
    <property type="project" value="GO_Central"/>
</dbReference>
<dbReference type="GO" id="GO:0006906">
    <property type="term" value="P:vesicle fusion"/>
    <property type="evidence" value="ECO:0000318"/>
    <property type="project" value="GO_Central"/>
</dbReference>
<dbReference type="GO" id="GO:0099003">
    <property type="term" value="P:vesicle-mediated transport in synapse"/>
    <property type="evidence" value="ECO:0000314"/>
    <property type="project" value="SynGO"/>
</dbReference>
<dbReference type="CDD" id="cd00179">
    <property type="entry name" value="SynN"/>
    <property type="match status" value="1"/>
</dbReference>
<dbReference type="FunFam" id="1.20.5.110:FF:000045">
    <property type="entry name" value="Syntaxin 4"/>
    <property type="match status" value="1"/>
</dbReference>
<dbReference type="FunFam" id="1.20.58.70:FF:000011">
    <property type="entry name" value="Syntaxin 4"/>
    <property type="match status" value="1"/>
</dbReference>
<dbReference type="Gene3D" id="1.20.5.110">
    <property type="match status" value="1"/>
</dbReference>
<dbReference type="Gene3D" id="1.20.58.70">
    <property type="match status" value="1"/>
</dbReference>
<dbReference type="InterPro" id="IPR010989">
    <property type="entry name" value="SNARE"/>
</dbReference>
<dbReference type="InterPro" id="IPR045242">
    <property type="entry name" value="Syntaxin"/>
</dbReference>
<dbReference type="InterPro" id="IPR006012">
    <property type="entry name" value="Syntaxin/epimorphin_CS"/>
</dbReference>
<dbReference type="InterPro" id="IPR006011">
    <property type="entry name" value="Syntaxin_N"/>
</dbReference>
<dbReference type="InterPro" id="IPR000727">
    <property type="entry name" value="T_SNARE_dom"/>
</dbReference>
<dbReference type="PANTHER" id="PTHR19957">
    <property type="entry name" value="SYNTAXIN"/>
    <property type="match status" value="1"/>
</dbReference>
<dbReference type="PANTHER" id="PTHR19957:SF97">
    <property type="entry name" value="SYNTAXIN-4"/>
    <property type="match status" value="1"/>
</dbReference>
<dbReference type="Pfam" id="PF05739">
    <property type="entry name" value="SNARE"/>
    <property type="match status" value="1"/>
</dbReference>
<dbReference type="Pfam" id="PF00804">
    <property type="entry name" value="Syntaxin"/>
    <property type="match status" value="1"/>
</dbReference>
<dbReference type="SMART" id="SM00503">
    <property type="entry name" value="SynN"/>
    <property type="match status" value="1"/>
</dbReference>
<dbReference type="SMART" id="SM00397">
    <property type="entry name" value="t_SNARE"/>
    <property type="match status" value="1"/>
</dbReference>
<dbReference type="SUPFAM" id="SSF47661">
    <property type="entry name" value="t-snare proteins"/>
    <property type="match status" value="1"/>
</dbReference>
<dbReference type="PROSITE" id="PS00914">
    <property type="entry name" value="SYNTAXIN"/>
    <property type="match status" value="1"/>
</dbReference>
<dbReference type="PROSITE" id="PS50192">
    <property type="entry name" value="T_SNARE"/>
    <property type="match status" value="1"/>
</dbReference>
<gene>
    <name type="primary">Stx4</name>
    <name type="synonym">Stx4a</name>
</gene>
<proteinExistence type="evidence at protein level"/>
<organism>
    <name type="scientific">Rattus norvegicus</name>
    <name type="common">Rat</name>
    <dbReference type="NCBI Taxonomy" id="10116"/>
    <lineage>
        <taxon>Eukaryota</taxon>
        <taxon>Metazoa</taxon>
        <taxon>Chordata</taxon>
        <taxon>Craniata</taxon>
        <taxon>Vertebrata</taxon>
        <taxon>Euteleostomi</taxon>
        <taxon>Mammalia</taxon>
        <taxon>Eutheria</taxon>
        <taxon>Euarchontoglires</taxon>
        <taxon>Glires</taxon>
        <taxon>Rodentia</taxon>
        <taxon>Myomorpha</taxon>
        <taxon>Muroidea</taxon>
        <taxon>Muridae</taxon>
        <taxon>Murinae</taxon>
        <taxon>Rattus</taxon>
    </lineage>
</organism>
<protein>
    <recommendedName>
        <fullName>Syntaxin-4</fullName>
    </recommendedName>
</protein>
<feature type="chain" id="PRO_0000210204" description="Syntaxin-4">
    <location>
        <begin position="1"/>
        <end position="298"/>
    </location>
</feature>
<feature type="topological domain" description="Cytoplasmic" evidence="4">
    <location>
        <begin position="1"/>
        <end position="274"/>
    </location>
</feature>
<feature type="transmembrane region" description="Helical; Anchor for type IV membrane protein" evidence="4">
    <location>
        <begin position="275"/>
        <end position="295"/>
    </location>
</feature>
<feature type="topological domain" description="Extracellular" evidence="4">
    <location>
        <begin position="296"/>
        <end position="298"/>
    </location>
</feature>
<feature type="domain" description="t-SNARE coiled-coil homology" evidence="5">
    <location>
        <begin position="200"/>
        <end position="262"/>
    </location>
</feature>
<feature type="region of interest" description="Interaction with CENPF" evidence="1">
    <location>
        <begin position="154"/>
        <end position="298"/>
    </location>
</feature>
<feature type="coiled-coil region" evidence="4">
    <location>
        <begin position="38"/>
        <end position="163"/>
    </location>
</feature>
<feature type="site" description="Required for neurite tip localization" evidence="8">
    <location>
        <position position="290"/>
    </location>
</feature>
<feature type="modified residue" description="Phosphoserine" evidence="13">
    <location>
        <position position="15"/>
    </location>
</feature>
<feature type="modified residue" description="Phosphoserine" evidence="2">
    <location>
        <position position="29"/>
    </location>
</feature>
<feature type="modified residue" description="Phosphoserine" evidence="13">
    <location>
        <position position="35"/>
    </location>
</feature>
<feature type="modified residue" description="Phosphoserine" evidence="3">
    <location>
        <position position="36"/>
    </location>
</feature>
<feature type="modified residue" description="Phosphoserine" evidence="13">
    <location>
        <position position="117"/>
    </location>
</feature>
<feature type="modified residue" description="Phosphoserine" evidence="2">
    <location>
        <position position="208"/>
    </location>
</feature>
<feature type="modified residue" description="Phosphoserine" evidence="2">
    <location>
        <position position="248"/>
    </location>
</feature>
<feature type="mutagenesis site" description="Mislocalization in neurons from neurite tips to perinuclear region." evidence="8">
    <original>I</original>
    <variation>F</variation>
    <location>
        <position position="290"/>
    </location>
</feature>
<feature type="sequence conflict" description="In Ref. 1; AAA03046." evidence="10" ref="1">
    <original>S</original>
    <variation>T</variation>
    <location>
        <position position="216"/>
    </location>
</feature>
<sequence>MRDRTHELRQGDNISDDEDEVRVALVVHSGAARLSSPDDEFFQKVQTIRQTMAKLESKVRELEKQQVTILATPLPEESMKQGLQNLREEIKQLGREVRAQLKAIEPQKEEADENYNSVNTRMKKTQHGVLSQQFVELINKCNSMQSEYREKNVERIRRQLKITNAGMVSDEELEQMLDSGQSEVFVSNILKDTQVTRQALNEISARHSEIQQLERSIRELHEIFTFLATEVEMQGEMINRIEKNILSSADYVERGQEHVKIALENQKKARKKKVMIAICVSVTVLILAVIIGITITVG</sequence>
<name>STX4_RAT</name>
<evidence type="ECO:0000250" key="1"/>
<evidence type="ECO:0000250" key="2">
    <source>
        <dbReference type="UniProtKB" id="P70452"/>
    </source>
</evidence>
<evidence type="ECO:0000250" key="3">
    <source>
        <dbReference type="UniProtKB" id="Q12846"/>
    </source>
</evidence>
<evidence type="ECO:0000255" key="4"/>
<evidence type="ECO:0000255" key="5">
    <source>
        <dbReference type="PROSITE-ProRule" id="PRU00202"/>
    </source>
</evidence>
<evidence type="ECO:0000269" key="6">
    <source>
    </source>
</evidence>
<evidence type="ECO:0000269" key="7">
    <source>
    </source>
</evidence>
<evidence type="ECO:0000269" key="8">
    <source>
    </source>
</evidence>
<evidence type="ECO:0000269" key="9">
    <source>
    </source>
</evidence>
<evidence type="ECO:0000305" key="10"/>
<evidence type="ECO:0000312" key="11">
    <source>
        <dbReference type="EMBL" id="EDM17224.1"/>
    </source>
</evidence>
<evidence type="ECO:0000312" key="12">
    <source>
        <dbReference type="Proteomes" id="UP000002494"/>
    </source>
</evidence>
<evidence type="ECO:0007744" key="13">
    <source>
    </source>
</evidence>
<accession>Q08850</accession>
<accession>G3V8I4</accession>